<reference key="1">
    <citation type="journal article" date="2004" name="Proc. Natl. Acad. Sci. U.S.A.">
        <title>Genome sequence of the enterobacterial phytopathogen Erwinia carotovora subsp. atroseptica and characterization of virulence factors.</title>
        <authorList>
            <person name="Bell K.S."/>
            <person name="Sebaihia M."/>
            <person name="Pritchard L."/>
            <person name="Holden M.T.G."/>
            <person name="Hyman L.J."/>
            <person name="Holeva M.C."/>
            <person name="Thomson N.R."/>
            <person name="Bentley S.D."/>
            <person name="Churcher L.J.C."/>
            <person name="Mungall K."/>
            <person name="Atkin R."/>
            <person name="Bason N."/>
            <person name="Brooks K."/>
            <person name="Chillingworth T."/>
            <person name="Clark K."/>
            <person name="Doggett J."/>
            <person name="Fraser A."/>
            <person name="Hance Z."/>
            <person name="Hauser H."/>
            <person name="Jagels K."/>
            <person name="Moule S."/>
            <person name="Norbertczak H."/>
            <person name="Ormond D."/>
            <person name="Price C."/>
            <person name="Quail M.A."/>
            <person name="Sanders M."/>
            <person name="Walker D."/>
            <person name="Whitehead S."/>
            <person name="Salmond G.P.C."/>
            <person name="Birch P.R.J."/>
            <person name="Parkhill J."/>
            <person name="Toth I.K."/>
        </authorList>
    </citation>
    <scope>NUCLEOTIDE SEQUENCE [LARGE SCALE GENOMIC DNA]</scope>
    <source>
        <strain>SCRI 1043 / ATCC BAA-672</strain>
    </source>
</reference>
<comment type="function">
    <text evidence="1">Catalyzes the transfer of an acyl group from acyl-phosphate (acyl-PO(4)) to glycerol-3-phosphate (G3P) to form lysophosphatidic acid (LPA). This enzyme utilizes acyl-phosphate as fatty acyl donor, but not acyl-CoA or acyl-ACP.</text>
</comment>
<comment type="catalytic activity">
    <reaction evidence="1">
        <text>an acyl phosphate + sn-glycerol 3-phosphate = a 1-acyl-sn-glycero-3-phosphate + phosphate</text>
        <dbReference type="Rhea" id="RHEA:34075"/>
        <dbReference type="ChEBI" id="CHEBI:43474"/>
        <dbReference type="ChEBI" id="CHEBI:57597"/>
        <dbReference type="ChEBI" id="CHEBI:57970"/>
        <dbReference type="ChEBI" id="CHEBI:59918"/>
        <dbReference type="EC" id="2.3.1.275"/>
    </reaction>
</comment>
<comment type="pathway">
    <text evidence="1">Lipid metabolism; phospholipid metabolism.</text>
</comment>
<comment type="subunit">
    <text evidence="1">Probably interacts with PlsX.</text>
</comment>
<comment type="subcellular location">
    <subcellularLocation>
        <location evidence="1">Cell inner membrane</location>
        <topology evidence="1">Multi-pass membrane protein</topology>
    </subcellularLocation>
</comment>
<comment type="similarity">
    <text evidence="1">Belongs to the PlsY family.</text>
</comment>
<gene>
    <name evidence="1" type="primary">plsY</name>
    <name type="ordered locus">ECA3591</name>
</gene>
<accession>Q6D157</accession>
<name>PLSY_PECAS</name>
<feature type="chain" id="PRO_0000188367" description="Glycerol-3-phosphate acyltransferase">
    <location>
        <begin position="1"/>
        <end position="211"/>
    </location>
</feature>
<feature type="transmembrane region" description="Helical" evidence="1">
    <location>
        <begin position="5"/>
        <end position="25"/>
    </location>
</feature>
<feature type="transmembrane region" description="Helical" evidence="1">
    <location>
        <begin position="58"/>
        <end position="78"/>
    </location>
</feature>
<feature type="transmembrane region" description="Helical" evidence="1">
    <location>
        <begin position="80"/>
        <end position="100"/>
    </location>
</feature>
<feature type="transmembrane region" description="Helical" evidence="1">
    <location>
        <begin position="112"/>
        <end position="132"/>
    </location>
</feature>
<feature type="transmembrane region" description="Helical" evidence="1">
    <location>
        <begin position="138"/>
        <end position="158"/>
    </location>
</feature>
<proteinExistence type="inferred from homology"/>
<protein>
    <recommendedName>
        <fullName evidence="1">Glycerol-3-phosphate acyltransferase</fullName>
    </recommendedName>
    <alternativeName>
        <fullName evidence="1">Acyl-PO4 G3P acyltransferase</fullName>
    </alternativeName>
    <alternativeName>
        <fullName evidence="1">Acyl-phosphate--glycerol-3-phosphate acyltransferase</fullName>
    </alternativeName>
    <alternativeName>
        <fullName evidence="1">G3P acyltransferase</fullName>
        <shortName evidence="1">GPAT</shortName>
        <ecNumber evidence="1">2.3.1.275</ecNumber>
    </alternativeName>
    <alternativeName>
        <fullName evidence="1">Lysophosphatidic acid synthase</fullName>
        <shortName evidence="1">LPA synthase</shortName>
    </alternativeName>
</protein>
<organism>
    <name type="scientific">Pectobacterium atrosepticum (strain SCRI 1043 / ATCC BAA-672)</name>
    <name type="common">Erwinia carotovora subsp. atroseptica</name>
    <dbReference type="NCBI Taxonomy" id="218491"/>
    <lineage>
        <taxon>Bacteria</taxon>
        <taxon>Pseudomonadati</taxon>
        <taxon>Pseudomonadota</taxon>
        <taxon>Gammaproteobacteria</taxon>
        <taxon>Enterobacterales</taxon>
        <taxon>Pectobacteriaceae</taxon>
        <taxon>Pectobacterium</taxon>
    </lineage>
</organism>
<dbReference type="EC" id="2.3.1.275" evidence="1"/>
<dbReference type="EMBL" id="BX950851">
    <property type="protein sequence ID" value="CAG76489.1"/>
    <property type="molecule type" value="Genomic_DNA"/>
</dbReference>
<dbReference type="RefSeq" id="WP_011095094.1">
    <property type="nucleotide sequence ID" value="NC_004547.2"/>
</dbReference>
<dbReference type="SMR" id="Q6D157"/>
<dbReference type="STRING" id="218491.ECA3591"/>
<dbReference type="KEGG" id="eca:ECA3591"/>
<dbReference type="PATRIC" id="fig|218491.5.peg.3642"/>
<dbReference type="eggNOG" id="COG0344">
    <property type="taxonomic scope" value="Bacteria"/>
</dbReference>
<dbReference type="HOGENOM" id="CLU_081254_0_2_6"/>
<dbReference type="OrthoDB" id="9777124at2"/>
<dbReference type="UniPathway" id="UPA00085"/>
<dbReference type="Proteomes" id="UP000007966">
    <property type="component" value="Chromosome"/>
</dbReference>
<dbReference type="GO" id="GO:0005886">
    <property type="term" value="C:plasma membrane"/>
    <property type="evidence" value="ECO:0007669"/>
    <property type="project" value="UniProtKB-SubCell"/>
</dbReference>
<dbReference type="GO" id="GO:0043772">
    <property type="term" value="F:acyl-phosphate glycerol-3-phosphate acyltransferase activity"/>
    <property type="evidence" value="ECO:0007669"/>
    <property type="project" value="UniProtKB-UniRule"/>
</dbReference>
<dbReference type="GO" id="GO:0008654">
    <property type="term" value="P:phospholipid biosynthetic process"/>
    <property type="evidence" value="ECO:0007669"/>
    <property type="project" value="UniProtKB-UniRule"/>
</dbReference>
<dbReference type="HAMAP" id="MF_01043">
    <property type="entry name" value="PlsY"/>
    <property type="match status" value="1"/>
</dbReference>
<dbReference type="InterPro" id="IPR003811">
    <property type="entry name" value="G3P_acylTferase_PlsY"/>
</dbReference>
<dbReference type="NCBIfam" id="TIGR00023">
    <property type="entry name" value="glycerol-3-phosphate 1-O-acyltransferase PlsY"/>
    <property type="match status" value="1"/>
</dbReference>
<dbReference type="PANTHER" id="PTHR30309:SF0">
    <property type="entry name" value="GLYCEROL-3-PHOSPHATE ACYLTRANSFERASE-RELATED"/>
    <property type="match status" value="1"/>
</dbReference>
<dbReference type="PANTHER" id="PTHR30309">
    <property type="entry name" value="INNER MEMBRANE PROTEIN YGIH"/>
    <property type="match status" value="1"/>
</dbReference>
<dbReference type="Pfam" id="PF02660">
    <property type="entry name" value="G3P_acyltransf"/>
    <property type="match status" value="1"/>
</dbReference>
<dbReference type="SMART" id="SM01207">
    <property type="entry name" value="G3P_acyltransf"/>
    <property type="match status" value="1"/>
</dbReference>
<sequence length="211" mass="22734">MSVTALGMMLIAYLCGSVSSAILFCKITGLPDPRLHGSGNPGATNVLRIGGKAAAATVLVFDILKGMLPVWGAYALGVTPLYLGLTAIAACLGHIYPVFFHFRGGKGVATALGAIAPIGLDLTGLMTGTWLLTVLLSGYSSLGAIVSALIAPFYVWWFKPQFTFPVAMLSCLILMRHHDNIQRLWRGQESKIWDKLRKKKQPEDEDTSPEE</sequence>
<evidence type="ECO:0000255" key="1">
    <source>
        <dbReference type="HAMAP-Rule" id="MF_01043"/>
    </source>
</evidence>
<keyword id="KW-0997">Cell inner membrane</keyword>
<keyword id="KW-1003">Cell membrane</keyword>
<keyword id="KW-0444">Lipid biosynthesis</keyword>
<keyword id="KW-0443">Lipid metabolism</keyword>
<keyword id="KW-0472">Membrane</keyword>
<keyword id="KW-0594">Phospholipid biosynthesis</keyword>
<keyword id="KW-1208">Phospholipid metabolism</keyword>
<keyword id="KW-1185">Reference proteome</keyword>
<keyword id="KW-0808">Transferase</keyword>
<keyword id="KW-0812">Transmembrane</keyword>
<keyword id="KW-1133">Transmembrane helix</keyword>